<reference key="1">
    <citation type="journal article" date="2000" name="Nature">
        <title>Sequence and analysis of chromosome 3 of the plant Arabidopsis thaliana.</title>
        <authorList>
            <person name="Salanoubat M."/>
            <person name="Lemcke K."/>
            <person name="Rieger M."/>
            <person name="Ansorge W."/>
            <person name="Unseld M."/>
            <person name="Fartmann B."/>
            <person name="Valle G."/>
            <person name="Bloecker H."/>
            <person name="Perez-Alonso M."/>
            <person name="Obermaier B."/>
            <person name="Delseny M."/>
            <person name="Boutry M."/>
            <person name="Grivell L.A."/>
            <person name="Mache R."/>
            <person name="Puigdomenech P."/>
            <person name="De Simone V."/>
            <person name="Choisne N."/>
            <person name="Artiguenave F."/>
            <person name="Robert C."/>
            <person name="Brottier P."/>
            <person name="Wincker P."/>
            <person name="Cattolico L."/>
            <person name="Weissenbach J."/>
            <person name="Saurin W."/>
            <person name="Quetier F."/>
            <person name="Schaefer M."/>
            <person name="Mueller-Auer S."/>
            <person name="Gabel C."/>
            <person name="Fuchs M."/>
            <person name="Benes V."/>
            <person name="Wurmbach E."/>
            <person name="Drzonek H."/>
            <person name="Erfle H."/>
            <person name="Jordan N."/>
            <person name="Bangert S."/>
            <person name="Wiedelmann R."/>
            <person name="Kranz H."/>
            <person name="Voss H."/>
            <person name="Holland R."/>
            <person name="Brandt P."/>
            <person name="Nyakatura G."/>
            <person name="Vezzi A."/>
            <person name="D'Angelo M."/>
            <person name="Pallavicini A."/>
            <person name="Toppo S."/>
            <person name="Simionati B."/>
            <person name="Conrad A."/>
            <person name="Hornischer K."/>
            <person name="Kauer G."/>
            <person name="Loehnert T.-H."/>
            <person name="Nordsiek G."/>
            <person name="Reichelt J."/>
            <person name="Scharfe M."/>
            <person name="Schoen O."/>
            <person name="Bargues M."/>
            <person name="Terol J."/>
            <person name="Climent J."/>
            <person name="Navarro P."/>
            <person name="Collado C."/>
            <person name="Perez-Perez A."/>
            <person name="Ottenwaelder B."/>
            <person name="Duchemin D."/>
            <person name="Cooke R."/>
            <person name="Laudie M."/>
            <person name="Berger-Llauro C."/>
            <person name="Purnelle B."/>
            <person name="Masuy D."/>
            <person name="de Haan M."/>
            <person name="Maarse A.C."/>
            <person name="Alcaraz J.-P."/>
            <person name="Cottet A."/>
            <person name="Casacuberta E."/>
            <person name="Monfort A."/>
            <person name="Argiriou A."/>
            <person name="Flores M."/>
            <person name="Liguori R."/>
            <person name="Vitale D."/>
            <person name="Mannhaupt G."/>
            <person name="Haase D."/>
            <person name="Schoof H."/>
            <person name="Rudd S."/>
            <person name="Zaccaria P."/>
            <person name="Mewes H.-W."/>
            <person name="Mayer K.F.X."/>
            <person name="Kaul S."/>
            <person name="Town C.D."/>
            <person name="Koo H.L."/>
            <person name="Tallon L.J."/>
            <person name="Jenkins J."/>
            <person name="Rooney T."/>
            <person name="Rizzo M."/>
            <person name="Walts A."/>
            <person name="Utterback T."/>
            <person name="Fujii C.Y."/>
            <person name="Shea T.P."/>
            <person name="Creasy T.H."/>
            <person name="Haas B."/>
            <person name="Maiti R."/>
            <person name="Wu D."/>
            <person name="Peterson J."/>
            <person name="Van Aken S."/>
            <person name="Pai G."/>
            <person name="Militscher J."/>
            <person name="Sellers P."/>
            <person name="Gill J.E."/>
            <person name="Feldblyum T.V."/>
            <person name="Preuss D."/>
            <person name="Lin X."/>
            <person name="Nierman W.C."/>
            <person name="Salzberg S.L."/>
            <person name="White O."/>
            <person name="Venter J.C."/>
            <person name="Fraser C.M."/>
            <person name="Kaneko T."/>
            <person name="Nakamura Y."/>
            <person name="Sato S."/>
            <person name="Kato T."/>
            <person name="Asamizu E."/>
            <person name="Sasamoto S."/>
            <person name="Kimura T."/>
            <person name="Idesawa K."/>
            <person name="Kawashima K."/>
            <person name="Kishida Y."/>
            <person name="Kiyokawa C."/>
            <person name="Kohara M."/>
            <person name="Matsumoto M."/>
            <person name="Matsuno A."/>
            <person name="Muraki A."/>
            <person name="Nakayama S."/>
            <person name="Nakazaki N."/>
            <person name="Shinpo S."/>
            <person name="Takeuchi C."/>
            <person name="Wada T."/>
            <person name="Watanabe A."/>
            <person name="Yamada M."/>
            <person name="Yasuda M."/>
            <person name="Tabata S."/>
        </authorList>
    </citation>
    <scope>NUCLEOTIDE SEQUENCE [LARGE SCALE GENOMIC DNA]</scope>
    <source>
        <strain>cv. Columbia</strain>
    </source>
</reference>
<reference key="2">
    <citation type="journal article" date="2017" name="Plant J.">
        <title>Araport11: a complete reannotation of the Arabidopsis thaliana reference genome.</title>
        <authorList>
            <person name="Cheng C.Y."/>
            <person name="Krishnakumar V."/>
            <person name="Chan A.P."/>
            <person name="Thibaud-Nissen F."/>
            <person name="Schobel S."/>
            <person name="Town C.D."/>
        </authorList>
    </citation>
    <scope>GENOME REANNOTATION</scope>
    <source>
        <strain>cv. Columbia</strain>
    </source>
</reference>
<reference key="3">
    <citation type="submission" date="2002-03" db="EMBL/GenBank/DDBJ databases">
        <title>Full-length cDNA from Arabidopsis thaliana.</title>
        <authorList>
            <person name="Brover V.V."/>
            <person name="Troukhan M.E."/>
            <person name="Alexandrov N.A."/>
            <person name="Lu Y.-P."/>
            <person name="Flavell R.B."/>
            <person name="Feldmann K.A."/>
        </authorList>
    </citation>
    <scope>NUCLEOTIDE SEQUENCE [LARGE SCALE MRNA]</scope>
</reference>
<reference key="4">
    <citation type="submission" date="2006-07" db="EMBL/GenBank/DDBJ databases">
        <title>Large-scale analysis of RIKEN Arabidopsis full-length (RAFL) cDNAs.</title>
        <authorList>
            <person name="Totoki Y."/>
            <person name="Seki M."/>
            <person name="Ishida J."/>
            <person name="Nakajima M."/>
            <person name="Enju A."/>
            <person name="Kamiya A."/>
            <person name="Narusaka M."/>
            <person name="Shin-i T."/>
            <person name="Nakagawa M."/>
            <person name="Sakamoto N."/>
            <person name="Oishi K."/>
            <person name="Kohara Y."/>
            <person name="Kobayashi M."/>
            <person name="Toyoda A."/>
            <person name="Sakaki Y."/>
            <person name="Sakurai T."/>
            <person name="Iida K."/>
            <person name="Akiyama K."/>
            <person name="Satou M."/>
            <person name="Toyoda T."/>
            <person name="Konagaya A."/>
            <person name="Carninci P."/>
            <person name="Kawai J."/>
            <person name="Hayashizaki Y."/>
            <person name="Shinozaki K."/>
        </authorList>
    </citation>
    <scope>NUCLEOTIDE SEQUENCE [LARGE SCALE MRNA]</scope>
    <source>
        <strain>cv. Columbia</strain>
    </source>
</reference>
<reference key="5">
    <citation type="submission" date="2006-09" db="EMBL/GenBank/DDBJ databases">
        <title>Arabidopsis ORF clones.</title>
        <authorList>
            <person name="Quinitio C."/>
            <person name="Chen H."/>
            <person name="Kim C.J."/>
            <person name="Shinn P."/>
            <person name="Ecker J.R."/>
        </authorList>
    </citation>
    <scope>NUCLEOTIDE SEQUENCE [LARGE SCALE MRNA]</scope>
    <source>
        <strain>cv. Columbia</strain>
    </source>
</reference>
<reference key="6">
    <citation type="journal article" date="2002" name="Biochem. Biophys. Res. Commun.">
        <title>DNA-binding specificity of the ERF/AP2 domain of Arabidopsis DREBs, transcription factors involved in dehydration- and cold-inducible gene expression.</title>
        <authorList>
            <person name="Sakuma Y."/>
            <person name="Liu Q."/>
            <person name="Dubouzet J.G."/>
            <person name="Abe H."/>
            <person name="Shinozaki K."/>
            <person name="Yamaguchi-Shinozaki K."/>
        </authorList>
    </citation>
    <scope>GENE FAMILY</scope>
    <scope>FUNCTION</scope>
    <scope>INDUCTION</scope>
</reference>
<reference key="7">
    <citation type="journal article" date="2006" name="Plant Physiol.">
        <title>Genome-wide analysis of the ERF gene family in Arabidopsis and rice.</title>
        <authorList>
            <person name="Nakano T."/>
            <person name="Suzuki K."/>
            <person name="Fujimura T."/>
            <person name="Shinshi H."/>
        </authorList>
    </citation>
    <scope>GENE FAMILY</scope>
    <scope>NOMENCLATURE</scope>
</reference>
<comment type="function">
    <text evidence="3">Transcriptional activator that binds specifically to the DNA sequence 5'-[AG]CCGAC-3'. Binding to the C-repeat/DRE element mediates high salinity-inducible transcription.</text>
</comment>
<comment type="interaction">
    <interactant intactId="EBI-15195807">
        <id>Q9SVX5</id>
    </interactant>
    <interactant intactId="EBI-2000137">
        <id>Q9MAI5</id>
        <label>ERF8</label>
    </interactant>
    <organismsDiffer>false</organismsDiffer>
    <experiments>3</experiments>
</comment>
<comment type="interaction">
    <interactant intactId="EBI-15195807">
        <id>Q9SVX5</id>
    </interactant>
    <interactant intactId="EBI-4459694">
        <id>Q6X7J9</id>
        <label>WOX4</label>
    </interactant>
    <organismsDiffer>false</organismsDiffer>
    <experiments>3</experiments>
</comment>
<comment type="subcellular location">
    <subcellularLocation>
        <location evidence="4">Nucleus</location>
    </subcellularLocation>
</comment>
<comment type="induction">
    <text evidence="3">By high-salt stress.</text>
</comment>
<comment type="similarity">
    <text evidence="4">Belongs to the AP2/ERF transcription factor family. ERF subfamily.</text>
</comment>
<proteinExistence type="evidence at protein level"/>
<organism>
    <name type="scientific">Arabidopsis thaliana</name>
    <name type="common">Mouse-ear cress</name>
    <dbReference type="NCBI Taxonomy" id="3702"/>
    <lineage>
        <taxon>Eukaryota</taxon>
        <taxon>Viridiplantae</taxon>
        <taxon>Streptophyta</taxon>
        <taxon>Embryophyta</taxon>
        <taxon>Tracheophyta</taxon>
        <taxon>Spermatophyta</taxon>
        <taxon>Magnoliopsida</taxon>
        <taxon>eudicotyledons</taxon>
        <taxon>Gunneridae</taxon>
        <taxon>Pentapetalae</taxon>
        <taxon>rosids</taxon>
        <taxon>malvids</taxon>
        <taxon>Brassicales</taxon>
        <taxon>Brassicaceae</taxon>
        <taxon>Camelineae</taxon>
        <taxon>Arabidopsis</taxon>
    </lineage>
</organism>
<accession>Q9SVX5</accession>
<accession>Q0WUE4</accession>
<dbReference type="EMBL" id="AL049660">
    <property type="protein sequence ID" value="CAB41195.1"/>
    <property type="molecule type" value="Genomic_DNA"/>
</dbReference>
<dbReference type="EMBL" id="CP002686">
    <property type="protein sequence ID" value="AEE79677.1"/>
    <property type="molecule type" value="Genomic_DNA"/>
</dbReference>
<dbReference type="EMBL" id="AY087243">
    <property type="protein sequence ID" value="AAM64799.1"/>
    <property type="molecule type" value="mRNA"/>
</dbReference>
<dbReference type="EMBL" id="AK227217">
    <property type="protein sequence ID" value="BAE99254.1"/>
    <property type="molecule type" value="mRNA"/>
</dbReference>
<dbReference type="EMBL" id="BT028945">
    <property type="protein sequence ID" value="ABI49492.1"/>
    <property type="molecule type" value="mRNA"/>
</dbReference>
<dbReference type="PIR" id="T06760">
    <property type="entry name" value="T06760"/>
</dbReference>
<dbReference type="RefSeq" id="NP_191319.1">
    <property type="nucleotide sequence ID" value="NM_115620.2"/>
</dbReference>
<dbReference type="SMR" id="Q9SVX5"/>
<dbReference type="BioGRID" id="10244">
    <property type="interactions" value="19"/>
</dbReference>
<dbReference type="FunCoup" id="Q9SVX5">
    <property type="interactions" value="301"/>
</dbReference>
<dbReference type="IntAct" id="Q9SVX5">
    <property type="interactions" value="17"/>
</dbReference>
<dbReference type="STRING" id="3702.Q9SVX5"/>
<dbReference type="PaxDb" id="3702-AT3G57600.1"/>
<dbReference type="EnsemblPlants" id="AT3G57600.1">
    <property type="protein sequence ID" value="AT3G57600.1"/>
    <property type="gene ID" value="AT3G57600"/>
</dbReference>
<dbReference type="GeneID" id="824929"/>
<dbReference type="Gramene" id="AT3G57600.1">
    <property type="protein sequence ID" value="AT3G57600.1"/>
    <property type="gene ID" value="AT3G57600"/>
</dbReference>
<dbReference type="KEGG" id="ath:AT3G57600"/>
<dbReference type="Araport" id="AT3G57600"/>
<dbReference type="TAIR" id="AT3G57600"/>
<dbReference type="eggNOG" id="ENOG502R56F">
    <property type="taxonomic scope" value="Eukaryota"/>
</dbReference>
<dbReference type="HOGENOM" id="CLU_984879_0_0_1"/>
<dbReference type="InParanoid" id="Q9SVX5"/>
<dbReference type="OMA" id="SHKFKWF"/>
<dbReference type="OrthoDB" id="550883at2759"/>
<dbReference type="PhylomeDB" id="Q9SVX5"/>
<dbReference type="PRO" id="PR:Q9SVX5"/>
<dbReference type="Proteomes" id="UP000006548">
    <property type="component" value="Chromosome 3"/>
</dbReference>
<dbReference type="ExpressionAtlas" id="Q9SVX5">
    <property type="expression patterns" value="baseline and differential"/>
</dbReference>
<dbReference type="GO" id="GO:0005634">
    <property type="term" value="C:nucleus"/>
    <property type="evidence" value="ECO:0007669"/>
    <property type="project" value="UniProtKB-SubCell"/>
</dbReference>
<dbReference type="GO" id="GO:0003677">
    <property type="term" value="F:DNA binding"/>
    <property type="evidence" value="ECO:0007669"/>
    <property type="project" value="UniProtKB-KW"/>
</dbReference>
<dbReference type="GO" id="GO:0003700">
    <property type="term" value="F:DNA-binding transcription factor activity"/>
    <property type="evidence" value="ECO:0000250"/>
    <property type="project" value="TAIR"/>
</dbReference>
<dbReference type="CDD" id="cd00018">
    <property type="entry name" value="AP2"/>
    <property type="match status" value="1"/>
</dbReference>
<dbReference type="FunFam" id="3.30.730.10:FF:000001">
    <property type="entry name" value="Ethylene-responsive transcription factor 2"/>
    <property type="match status" value="1"/>
</dbReference>
<dbReference type="Gene3D" id="3.30.730.10">
    <property type="entry name" value="AP2/ERF domain"/>
    <property type="match status" value="1"/>
</dbReference>
<dbReference type="InterPro" id="IPR001471">
    <property type="entry name" value="AP2/ERF_dom"/>
</dbReference>
<dbReference type="InterPro" id="IPR036955">
    <property type="entry name" value="AP2/ERF_dom_sf"/>
</dbReference>
<dbReference type="InterPro" id="IPR016177">
    <property type="entry name" value="DNA-bd_dom_sf"/>
</dbReference>
<dbReference type="PANTHER" id="PTHR31241">
    <property type="entry name" value="DEHYDRATION-RESPONSIVE ELEMENT-BINDING PROTEIN 2C"/>
    <property type="match status" value="1"/>
</dbReference>
<dbReference type="PANTHER" id="PTHR31241:SF2">
    <property type="entry name" value="DEHYDRATION-RESPONSIVE ELEMENT-BINDING PROTEIN 2F"/>
    <property type="match status" value="1"/>
</dbReference>
<dbReference type="Pfam" id="PF00847">
    <property type="entry name" value="AP2"/>
    <property type="match status" value="1"/>
</dbReference>
<dbReference type="PRINTS" id="PR00367">
    <property type="entry name" value="ETHRSPELEMNT"/>
</dbReference>
<dbReference type="SMART" id="SM00380">
    <property type="entry name" value="AP2"/>
    <property type="match status" value="1"/>
</dbReference>
<dbReference type="SUPFAM" id="SSF54171">
    <property type="entry name" value="DNA-binding domain"/>
    <property type="match status" value="1"/>
</dbReference>
<dbReference type="PROSITE" id="PS51032">
    <property type="entry name" value="AP2_ERF"/>
    <property type="match status" value="1"/>
</dbReference>
<evidence type="ECO:0000255" key="1">
    <source>
        <dbReference type="PROSITE-ProRule" id="PRU00366"/>
    </source>
</evidence>
<evidence type="ECO:0000256" key="2">
    <source>
        <dbReference type="SAM" id="MobiDB-lite"/>
    </source>
</evidence>
<evidence type="ECO:0000269" key="3">
    <source>
    </source>
</evidence>
<evidence type="ECO:0000305" key="4"/>
<name>DRE2F_ARATH</name>
<feature type="chain" id="PRO_0000112539" description="Dehydration-responsive element-binding protein 2F">
    <location>
        <begin position="1"/>
        <end position="277"/>
    </location>
</feature>
<feature type="DNA-binding region" description="AP2/ERF" evidence="1">
    <location>
        <begin position="27"/>
        <end position="84"/>
    </location>
</feature>
<feature type="region of interest" description="Disordered" evidence="2">
    <location>
        <begin position="1"/>
        <end position="24"/>
    </location>
</feature>
<feature type="region of interest" description="Disordered" evidence="2">
    <location>
        <begin position="144"/>
        <end position="180"/>
    </location>
</feature>
<feature type="region of interest" description="Disordered" evidence="2">
    <location>
        <begin position="203"/>
        <end position="231"/>
    </location>
</feature>
<feature type="compositionally biased region" description="Low complexity" evidence="2">
    <location>
        <begin position="144"/>
        <end position="160"/>
    </location>
</feature>
<feature type="compositionally biased region" description="Basic and acidic residues" evidence="2">
    <location>
        <begin position="162"/>
        <end position="171"/>
    </location>
</feature>
<keyword id="KW-0010">Activator</keyword>
<keyword id="KW-0238">DNA-binding</keyword>
<keyword id="KW-0539">Nucleus</keyword>
<keyword id="KW-1185">Reference proteome</keyword>
<keyword id="KW-0346">Stress response</keyword>
<keyword id="KW-0804">Transcription</keyword>
<keyword id="KW-0805">Transcription regulation</keyword>
<protein>
    <recommendedName>
        <fullName>Dehydration-responsive element-binding protein 2F</fullName>
        <shortName>Protein DREB2F</shortName>
    </recommendedName>
</protein>
<gene>
    <name type="primary">DREB2F</name>
    <name type="synonym">ERF051</name>
    <name type="ordered locus">At3g57600</name>
    <name type="ORF">F15B8.210</name>
</gene>
<sequence length="277" mass="31572">MEKSSSMKQWKKGPARGKGGPQNALCQYRGVRQRTWGKWVAEIREPKKRARLWLGSFATAEEAAMAYDEAALKLYGHDAYLNLPHLQRNTRPSLSNSQRFKWVPSRKFISMFPSCGMLNVNAQPSVHIIQQRLEELKKTGLLSQSYSSSSSSTESKTNTSFLDEKTSKGETDNMFEGGDQKKPEIDLTEFLQQLGILKDENEAEPSEVAECHSPPPWNEQEETGSPFRTENFSWDTLIEMPRSETTTMQFDSSNFGSYDFEDDVSFPSIWDYYGSLD</sequence>